<dbReference type="EC" id="2.1.1.199" evidence="1"/>
<dbReference type="EMBL" id="CP000261">
    <property type="protein sequence ID" value="ABF36443.1"/>
    <property type="status" value="ALT_INIT"/>
    <property type="molecule type" value="Genomic_DNA"/>
</dbReference>
<dbReference type="SMR" id="Q1JAG5"/>
<dbReference type="KEGG" id="spj:MGAS2096_Spy1391"/>
<dbReference type="HOGENOM" id="CLU_038422_2_0_9"/>
<dbReference type="GO" id="GO:0005737">
    <property type="term" value="C:cytoplasm"/>
    <property type="evidence" value="ECO:0007669"/>
    <property type="project" value="UniProtKB-SubCell"/>
</dbReference>
<dbReference type="GO" id="GO:0071424">
    <property type="term" value="F:rRNA (cytosine-N4-)-methyltransferase activity"/>
    <property type="evidence" value="ECO:0007669"/>
    <property type="project" value="UniProtKB-UniRule"/>
</dbReference>
<dbReference type="GO" id="GO:0070475">
    <property type="term" value="P:rRNA base methylation"/>
    <property type="evidence" value="ECO:0007669"/>
    <property type="project" value="UniProtKB-UniRule"/>
</dbReference>
<dbReference type="FunFam" id="1.10.150.170:FF:000001">
    <property type="entry name" value="Ribosomal RNA small subunit methyltransferase H"/>
    <property type="match status" value="1"/>
</dbReference>
<dbReference type="Gene3D" id="1.10.150.170">
    <property type="entry name" value="Putative methyltransferase TM0872, insert domain"/>
    <property type="match status" value="1"/>
</dbReference>
<dbReference type="Gene3D" id="3.40.50.150">
    <property type="entry name" value="Vaccinia Virus protein VP39"/>
    <property type="match status" value="1"/>
</dbReference>
<dbReference type="HAMAP" id="MF_01007">
    <property type="entry name" value="16SrRNA_methyltr_H"/>
    <property type="match status" value="1"/>
</dbReference>
<dbReference type="InterPro" id="IPR002903">
    <property type="entry name" value="RsmH"/>
</dbReference>
<dbReference type="InterPro" id="IPR023397">
    <property type="entry name" value="SAM-dep_MeTrfase_MraW_recog"/>
</dbReference>
<dbReference type="InterPro" id="IPR029063">
    <property type="entry name" value="SAM-dependent_MTases_sf"/>
</dbReference>
<dbReference type="NCBIfam" id="TIGR00006">
    <property type="entry name" value="16S rRNA (cytosine(1402)-N(4))-methyltransferase RsmH"/>
    <property type="match status" value="1"/>
</dbReference>
<dbReference type="PANTHER" id="PTHR11265:SF0">
    <property type="entry name" value="12S RRNA N4-METHYLCYTIDINE METHYLTRANSFERASE"/>
    <property type="match status" value="1"/>
</dbReference>
<dbReference type="PANTHER" id="PTHR11265">
    <property type="entry name" value="S-ADENOSYL-METHYLTRANSFERASE MRAW"/>
    <property type="match status" value="1"/>
</dbReference>
<dbReference type="Pfam" id="PF01795">
    <property type="entry name" value="Methyltransf_5"/>
    <property type="match status" value="1"/>
</dbReference>
<dbReference type="PIRSF" id="PIRSF004486">
    <property type="entry name" value="MraW"/>
    <property type="match status" value="1"/>
</dbReference>
<dbReference type="SUPFAM" id="SSF81799">
    <property type="entry name" value="Putative methyltransferase TM0872, insert domain"/>
    <property type="match status" value="1"/>
</dbReference>
<dbReference type="SUPFAM" id="SSF53335">
    <property type="entry name" value="S-adenosyl-L-methionine-dependent methyltransferases"/>
    <property type="match status" value="1"/>
</dbReference>
<keyword id="KW-0963">Cytoplasm</keyword>
<keyword id="KW-0489">Methyltransferase</keyword>
<keyword id="KW-0698">rRNA processing</keyword>
<keyword id="KW-0949">S-adenosyl-L-methionine</keyword>
<keyword id="KW-0808">Transferase</keyword>
<organism>
    <name type="scientific">Streptococcus pyogenes serotype M12 (strain MGAS2096)</name>
    <dbReference type="NCBI Taxonomy" id="370553"/>
    <lineage>
        <taxon>Bacteria</taxon>
        <taxon>Bacillati</taxon>
        <taxon>Bacillota</taxon>
        <taxon>Bacilli</taxon>
        <taxon>Lactobacillales</taxon>
        <taxon>Streptococcaceae</taxon>
        <taxon>Streptococcus</taxon>
    </lineage>
</organism>
<protein>
    <recommendedName>
        <fullName evidence="1">Ribosomal RNA small subunit methyltransferase H</fullName>
        <ecNumber evidence="1">2.1.1.199</ecNumber>
    </recommendedName>
    <alternativeName>
        <fullName evidence="1">16S rRNA m(4)C1402 methyltransferase</fullName>
    </alternativeName>
    <alternativeName>
        <fullName evidence="1">rRNA (cytosine-N(4)-)-methyltransferase RsmH</fullName>
    </alternativeName>
</protein>
<feature type="chain" id="PRO_0000387158" description="Ribosomal RNA small subunit methyltransferase H">
    <location>
        <begin position="1"/>
        <end position="316"/>
    </location>
</feature>
<feature type="binding site" evidence="1">
    <location>
        <begin position="35"/>
        <end position="37"/>
    </location>
    <ligand>
        <name>S-adenosyl-L-methionine</name>
        <dbReference type="ChEBI" id="CHEBI:59789"/>
    </ligand>
</feature>
<feature type="binding site" evidence="1">
    <location>
        <position position="55"/>
    </location>
    <ligand>
        <name>S-adenosyl-L-methionine</name>
        <dbReference type="ChEBI" id="CHEBI:59789"/>
    </ligand>
</feature>
<feature type="binding site" evidence="1">
    <location>
        <position position="84"/>
    </location>
    <ligand>
        <name>S-adenosyl-L-methionine</name>
        <dbReference type="ChEBI" id="CHEBI:59789"/>
    </ligand>
</feature>
<feature type="binding site" evidence="1">
    <location>
        <position position="105"/>
    </location>
    <ligand>
        <name>S-adenosyl-L-methionine</name>
        <dbReference type="ChEBI" id="CHEBI:59789"/>
    </ligand>
</feature>
<feature type="binding site" evidence="1">
    <location>
        <position position="112"/>
    </location>
    <ligand>
        <name>S-adenosyl-L-methionine</name>
        <dbReference type="ChEBI" id="CHEBI:59789"/>
    </ligand>
</feature>
<accession>Q1JAG5</accession>
<comment type="function">
    <text evidence="1">Specifically methylates the N4 position of cytidine in position 1402 (C1402) of 16S rRNA.</text>
</comment>
<comment type="catalytic activity">
    <reaction evidence="1">
        <text>cytidine(1402) in 16S rRNA + S-adenosyl-L-methionine = N(4)-methylcytidine(1402) in 16S rRNA + S-adenosyl-L-homocysteine + H(+)</text>
        <dbReference type="Rhea" id="RHEA:42928"/>
        <dbReference type="Rhea" id="RHEA-COMP:10286"/>
        <dbReference type="Rhea" id="RHEA-COMP:10287"/>
        <dbReference type="ChEBI" id="CHEBI:15378"/>
        <dbReference type="ChEBI" id="CHEBI:57856"/>
        <dbReference type="ChEBI" id="CHEBI:59789"/>
        <dbReference type="ChEBI" id="CHEBI:74506"/>
        <dbReference type="ChEBI" id="CHEBI:82748"/>
        <dbReference type="EC" id="2.1.1.199"/>
    </reaction>
</comment>
<comment type="subcellular location">
    <subcellularLocation>
        <location evidence="1">Cytoplasm</location>
    </subcellularLocation>
</comment>
<comment type="similarity">
    <text evidence="1">Belongs to the methyltransferase superfamily. RsmH family.</text>
</comment>
<comment type="sequence caution" evidence="2">
    <conflict type="erroneous initiation">
        <sequence resource="EMBL-CDS" id="ABF36443"/>
    </conflict>
</comment>
<sequence>MTKEFHHVTVLLHETVDMLDIKPDGIYVDATLGGSGHSAYLLSKLGEEGHLYCFDQDQKAIDNAQVTLKSYIDKGQVTFIKDNFRHLKARLTALGVDEIDGILYDLGVSSPQLDERERGFSYKQDAPLDMRMDRQSLLTAYEVVNTYPFNDLVKIFFKYGEDKFSKQIARKIEQARAIKPIETTTELAELIKAAKPAKELKKKGHPAKQIFQAIRIEVNDELGAADESIQDAMELLALDGRISVITFHSLEDRLTKQLFKEASTVDVPKGLPLIPEDMKPKFELVSRKPILPSHSELTANKRAHSAKLRVAKKIRK</sequence>
<reference key="1">
    <citation type="journal article" date="2006" name="Proc. Natl. Acad. Sci. U.S.A.">
        <title>Molecular genetic anatomy of inter- and intraserotype variation in the human bacterial pathogen group A Streptococcus.</title>
        <authorList>
            <person name="Beres S.B."/>
            <person name="Richter E.W."/>
            <person name="Nagiec M.J."/>
            <person name="Sumby P."/>
            <person name="Porcella S.F."/>
            <person name="DeLeo F.R."/>
            <person name="Musser J.M."/>
        </authorList>
    </citation>
    <scope>NUCLEOTIDE SEQUENCE [LARGE SCALE GENOMIC DNA]</scope>
    <source>
        <strain>MGAS2096</strain>
    </source>
</reference>
<evidence type="ECO:0000255" key="1">
    <source>
        <dbReference type="HAMAP-Rule" id="MF_01007"/>
    </source>
</evidence>
<evidence type="ECO:0000305" key="2"/>
<name>RSMH_STRPB</name>
<gene>
    <name evidence="1" type="primary">rsmH</name>
    <name type="synonym">mraW</name>
    <name type="ordered locus">MGAS2096_Spy1391</name>
</gene>
<proteinExistence type="inferred from homology"/>